<reference key="1">
    <citation type="journal article" date="2003" name="Nat. Genet.">
        <title>Comparative analysis of the genome sequences of Bordetella pertussis, Bordetella parapertussis and Bordetella bronchiseptica.</title>
        <authorList>
            <person name="Parkhill J."/>
            <person name="Sebaihia M."/>
            <person name="Preston A."/>
            <person name="Murphy L.D."/>
            <person name="Thomson N.R."/>
            <person name="Harris D.E."/>
            <person name="Holden M.T.G."/>
            <person name="Churcher C.M."/>
            <person name="Bentley S.D."/>
            <person name="Mungall K.L."/>
            <person name="Cerdeno-Tarraga A.-M."/>
            <person name="Temple L."/>
            <person name="James K.D."/>
            <person name="Harris B."/>
            <person name="Quail M.A."/>
            <person name="Achtman M."/>
            <person name="Atkin R."/>
            <person name="Baker S."/>
            <person name="Basham D."/>
            <person name="Bason N."/>
            <person name="Cherevach I."/>
            <person name="Chillingworth T."/>
            <person name="Collins M."/>
            <person name="Cronin A."/>
            <person name="Davis P."/>
            <person name="Doggett J."/>
            <person name="Feltwell T."/>
            <person name="Goble A."/>
            <person name="Hamlin N."/>
            <person name="Hauser H."/>
            <person name="Holroyd S."/>
            <person name="Jagels K."/>
            <person name="Leather S."/>
            <person name="Moule S."/>
            <person name="Norberczak H."/>
            <person name="O'Neil S."/>
            <person name="Ormond D."/>
            <person name="Price C."/>
            <person name="Rabbinowitsch E."/>
            <person name="Rutter S."/>
            <person name="Sanders M."/>
            <person name="Saunders D."/>
            <person name="Seeger K."/>
            <person name="Sharp S."/>
            <person name="Simmonds M."/>
            <person name="Skelton J."/>
            <person name="Squares R."/>
            <person name="Squares S."/>
            <person name="Stevens K."/>
            <person name="Unwin L."/>
            <person name="Whitehead S."/>
            <person name="Barrell B.G."/>
            <person name="Maskell D.J."/>
        </authorList>
    </citation>
    <scope>NUCLEOTIDE SEQUENCE [LARGE SCALE GENOMIC DNA]</scope>
    <source>
        <strain>Tohama I / ATCC BAA-589 / NCTC 13251</strain>
    </source>
</reference>
<dbReference type="EC" id="2.8.1.-" evidence="1"/>
<dbReference type="EMBL" id="BX640421">
    <property type="protein sequence ID" value="CAE43539.1"/>
    <property type="molecule type" value="Genomic_DNA"/>
</dbReference>
<dbReference type="RefSeq" id="NP_881817.1">
    <property type="nucleotide sequence ID" value="NC_002929.2"/>
</dbReference>
<dbReference type="RefSeq" id="WP_010931381.1">
    <property type="nucleotide sequence ID" value="NZ_CP039022.1"/>
</dbReference>
<dbReference type="SMR" id="Q7VU56"/>
<dbReference type="STRING" id="257313.BP3273"/>
<dbReference type="PaxDb" id="257313-BP3273"/>
<dbReference type="GeneID" id="69603199"/>
<dbReference type="KEGG" id="bpe:BP3273"/>
<dbReference type="PATRIC" id="fig|257313.5.peg.3545"/>
<dbReference type="eggNOG" id="COG0037">
    <property type="taxonomic scope" value="Bacteria"/>
</dbReference>
<dbReference type="HOGENOM" id="CLU_026481_0_0_4"/>
<dbReference type="Proteomes" id="UP000002676">
    <property type="component" value="Chromosome"/>
</dbReference>
<dbReference type="GO" id="GO:0005737">
    <property type="term" value="C:cytoplasm"/>
    <property type="evidence" value="ECO:0007669"/>
    <property type="project" value="UniProtKB-SubCell"/>
</dbReference>
<dbReference type="GO" id="GO:0051539">
    <property type="term" value="F:4 iron, 4 sulfur cluster binding"/>
    <property type="evidence" value="ECO:0007669"/>
    <property type="project" value="UniProtKB-UniRule"/>
</dbReference>
<dbReference type="GO" id="GO:0005524">
    <property type="term" value="F:ATP binding"/>
    <property type="evidence" value="ECO:0007669"/>
    <property type="project" value="UniProtKB-UniRule"/>
</dbReference>
<dbReference type="GO" id="GO:0000287">
    <property type="term" value="F:magnesium ion binding"/>
    <property type="evidence" value="ECO:0007669"/>
    <property type="project" value="UniProtKB-UniRule"/>
</dbReference>
<dbReference type="GO" id="GO:0016783">
    <property type="term" value="F:sulfurtransferase activity"/>
    <property type="evidence" value="ECO:0007669"/>
    <property type="project" value="UniProtKB-UniRule"/>
</dbReference>
<dbReference type="GO" id="GO:0000049">
    <property type="term" value="F:tRNA binding"/>
    <property type="evidence" value="ECO:0007669"/>
    <property type="project" value="UniProtKB-KW"/>
</dbReference>
<dbReference type="GO" id="GO:0034227">
    <property type="term" value="P:tRNA thio-modification"/>
    <property type="evidence" value="ECO:0007669"/>
    <property type="project" value="UniProtKB-UniRule"/>
</dbReference>
<dbReference type="CDD" id="cd24138">
    <property type="entry name" value="TtcA-like"/>
    <property type="match status" value="1"/>
</dbReference>
<dbReference type="Gene3D" id="3.40.50.620">
    <property type="entry name" value="HUPs"/>
    <property type="match status" value="1"/>
</dbReference>
<dbReference type="HAMAP" id="MF_01850">
    <property type="entry name" value="TtcA"/>
    <property type="match status" value="1"/>
</dbReference>
<dbReference type="InterPro" id="IPR014729">
    <property type="entry name" value="Rossmann-like_a/b/a_fold"/>
</dbReference>
<dbReference type="InterPro" id="IPR011063">
    <property type="entry name" value="TilS/TtcA_N"/>
</dbReference>
<dbReference type="InterPro" id="IPR012089">
    <property type="entry name" value="tRNA_Cyd_32_2_STrfase"/>
</dbReference>
<dbReference type="NCBIfam" id="NF007972">
    <property type="entry name" value="PRK10696.1"/>
    <property type="match status" value="1"/>
</dbReference>
<dbReference type="PANTHER" id="PTHR43686:SF1">
    <property type="entry name" value="AMINOTRAN_5 DOMAIN-CONTAINING PROTEIN"/>
    <property type="match status" value="1"/>
</dbReference>
<dbReference type="PANTHER" id="PTHR43686">
    <property type="entry name" value="SULFURTRANSFERASE-RELATED"/>
    <property type="match status" value="1"/>
</dbReference>
<dbReference type="Pfam" id="PF01171">
    <property type="entry name" value="ATP_bind_3"/>
    <property type="match status" value="1"/>
</dbReference>
<dbReference type="SUPFAM" id="SSF52402">
    <property type="entry name" value="Adenine nucleotide alpha hydrolases-like"/>
    <property type="match status" value="1"/>
</dbReference>
<accession>Q7VU56</accession>
<keyword id="KW-0004">4Fe-4S</keyword>
<keyword id="KW-0067">ATP-binding</keyword>
<keyword id="KW-0963">Cytoplasm</keyword>
<keyword id="KW-0408">Iron</keyword>
<keyword id="KW-0411">Iron-sulfur</keyword>
<keyword id="KW-0460">Magnesium</keyword>
<keyword id="KW-0479">Metal-binding</keyword>
<keyword id="KW-0547">Nucleotide-binding</keyword>
<keyword id="KW-1185">Reference proteome</keyword>
<keyword id="KW-0694">RNA-binding</keyword>
<keyword id="KW-0808">Transferase</keyword>
<keyword id="KW-0819">tRNA processing</keyword>
<keyword id="KW-0820">tRNA-binding</keyword>
<organism>
    <name type="scientific">Bordetella pertussis (strain Tohama I / ATCC BAA-589 / NCTC 13251)</name>
    <dbReference type="NCBI Taxonomy" id="257313"/>
    <lineage>
        <taxon>Bacteria</taxon>
        <taxon>Pseudomonadati</taxon>
        <taxon>Pseudomonadota</taxon>
        <taxon>Betaproteobacteria</taxon>
        <taxon>Burkholderiales</taxon>
        <taxon>Alcaligenaceae</taxon>
        <taxon>Bordetella</taxon>
    </lineage>
</organism>
<name>TTCA_BORPE</name>
<gene>
    <name evidence="1" type="primary">ttcA</name>
    <name type="ordered locus">BP3273</name>
</gene>
<feature type="chain" id="PRO_0000348670" description="tRNA-cytidine(32) 2-sulfurtransferase">
    <location>
        <begin position="1"/>
        <end position="320"/>
    </location>
</feature>
<feature type="short sequence motif" description="PP-loop motif" evidence="1">
    <location>
        <begin position="54"/>
        <end position="59"/>
    </location>
</feature>
<feature type="binding site" evidence="1">
    <location>
        <position position="129"/>
    </location>
    <ligand>
        <name>[4Fe-4S] cluster</name>
        <dbReference type="ChEBI" id="CHEBI:49883"/>
    </ligand>
</feature>
<feature type="binding site" evidence="1">
    <location>
        <position position="132"/>
    </location>
    <ligand>
        <name>[4Fe-4S] cluster</name>
        <dbReference type="ChEBI" id="CHEBI:49883"/>
    </ligand>
</feature>
<feature type="binding site" evidence="1">
    <location>
        <position position="220"/>
    </location>
    <ligand>
        <name>[4Fe-4S] cluster</name>
        <dbReference type="ChEBI" id="CHEBI:49883"/>
    </ligand>
</feature>
<comment type="function">
    <text evidence="1">Catalyzes the ATP-dependent 2-thiolation of cytidine in position 32 of tRNA, to form 2-thiocytidine (s(2)C32). The sulfur atoms are provided by the cysteine/cysteine desulfurase (IscS) system.</text>
</comment>
<comment type="catalytic activity">
    <reaction evidence="1">
        <text>cytidine(32) in tRNA + S-sulfanyl-L-cysteinyl-[cysteine desulfurase] + AH2 + ATP = 2-thiocytidine(32) in tRNA + L-cysteinyl-[cysteine desulfurase] + A + AMP + diphosphate + H(+)</text>
        <dbReference type="Rhea" id="RHEA:57048"/>
        <dbReference type="Rhea" id="RHEA-COMP:10288"/>
        <dbReference type="Rhea" id="RHEA-COMP:12157"/>
        <dbReference type="Rhea" id="RHEA-COMP:12158"/>
        <dbReference type="Rhea" id="RHEA-COMP:14821"/>
        <dbReference type="ChEBI" id="CHEBI:13193"/>
        <dbReference type="ChEBI" id="CHEBI:15378"/>
        <dbReference type="ChEBI" id="CHEBI:17499"/>
        <dbReference type="ChEBI" id="CHEBI:29950"/>
        <dbReference type="ChEBI" id="CHEBI:30616"/>
        <dbReference type="ChEBI" id="CHEBI:33019"/>
        <dbReference type="ChEBI" id="CHEBI:61963"/>
        <dbReference type="ChEBI" id="CHEBI:82748"/>
        <dbReference type="ChEBI" id="CHEBI:141453"/>
        <dbReference type="ChEBI" id="CHEBI:456215"/>
    </reaction>
    <physiologicalReaction direction="left-to-right" evidence="1">
        <dbReference type="Rhea" id="RHEA:57049"/>
    </physiologicalReaction>
</comment>
<comment type="cofactor">
    <cofactor evidence="1">
        <name>Mg(2+)</name>
        <dbReference type="ChEBI" id="CHEBI:18420"/>
    </cofactor>
</comment>
<comment type="cofactor">
    <cofactor evidence="1">
        <name>[4Fe-4S] cluster</name>
        <dbReference type="ChEBI" id="CHEBI:49883"/>
    </cofactor>
    <text evidence="1">Binds 1 [4Fe-4S] cluster per subunit. The cluster is chelated by three Cys residues, the fourth Fe has a free coordination site that may bind a sulfur atom transferred from the persulfide of IscS.</text>
</comment>
<comment type="pathway">
    <text evidence="1">tRNA modification.</text>
</comment>
<comment type="subunit">
    <text evidence="1">Homodimer.</text>
</comment>
<comment type="subcellular location">
    <subcellularLocation>
        <location evidence="1">Cytoplasm</location>
    </subcellularLocation>
</comment>
<comment type="miscellaneous">
    <text evidence="1">The thiolation reaction likely consists of two steps: a first activation step by ATP to form an adenylated intermediate of the target base of tRNA, and a second nucleophilic substitution step of the sulfur (S) atom supplied by the hydrosulfide attached to the Fe-S cluster.</text>
</comment>
<comment type="similarity">
    <text evidence="1">Belongs to the TtcA family.</text>
</comment>
<evidence type="ECO:0000255" key="1">
    <source>
        <dbReference type="HAMAP-Rule" id="MF_01850"/>
    </source>
</evidence>
<sequence length="320" mass="35264">MTLTASPTAARTPAEEKARFEGNKLAKRLARETTRAIADYNMIEAGDKVMVCLSGGKDSYALLDILLSLQKRAPFAFEIIAVNLDQKQPGFPPEILPDYLRALGVPFHIETQDTYSIVTRVIPEGKTMCSLCSRLRRGILYRVASELGATKIALGHHRDDILGTFFLNLFYGGKAKGMPPKLVSDDGRHTVIRPLVYVPESDLIAYAQFKQFPIIPCNLCGSQENLKRKEVGRMIQEWDRKHPGRSWNVFNALSRVVPSHLMDRDLFDFVGLKPTGVADAGGDTAFDQIDPEPDTAGPGCASDAPAGQADGMAEQRVVFR</sequence>
<protein>
    <recommendedName>
        <fullName evidence="1">tRNA-cytidine(32) 2-sulfurtransferase</fullName>
        <ecNumber evidence="1">2.8.1.-</ecNumber>
    </recommendedName>
    <alternativeName>
        <fullName evidence="1">Two-thiocytidine biosynthesis protein A</fullName>
    </alternativeName>
    <alternativeName>
        <fullName evidence="1">tRNA 2-thiocytidine biosynthesis protein TtcA</fullName>
    </alternativeName>
</protein>
<proteinExistence type="inferred from homology"/>